<gene>
    <name evidence="1" type="primary">cmk</name>
    <name type="ordered locus">aq_2153</name>
</gene>
<protein>
    <recommendedName>
        <fullName evidence="1">Cytidylate kinase</fullName>
        <shortName evidence="1">CK</shortName>
        <ecNumber evidence="1">2.7.4.25</ecNumber>
    </recommendedName>
    <alternativeName>
        <fullName evidence="1">Cytidine monophosphate kinase</fullName>
        <shortName evidence="1">CMP kinase</shortName>
    </alternativeName>
</protein>
<comment type="catalytic activity">
    <reaction evidence="1">
        <text>CMP + ATP = CDP + ADP</text>
        <dbReference type="Rhea" id="RHEA:11600"/>
        <dbReference type="ChEBI" id="CHEBI:30616"/>
        <dbReference type="ChEBI" id="CHEBI:58069"/>
        <dbReference type="ChEBI" id="CHEBI:60377"/>
        <dbReference type="ChEBI" id="CHEBI:456216"/>
        <dbReference type="EC" id="2.7.4.25"/>
    </reaction>
</comment>
<comment type="catalytic activity">
    <reaction evidence="1">
        <text>dCMP + ATP = dCDP + ADP</text>
        <dbReference type="Rhea" id="RHEA:25094"/>
        <dbReference type="ChEBI" id="CHEBI:30616"/>
        <dbReference type="ChEBI" id="CHEBI:57566"/>
        <dbReference type="ChEBI" id="CHEBI:58593"/>
        <dbReference type="ChEBI" id="CHEBI:456216"/>
        <dbReference type="EC" id="2.7.4.25"/>
    </reaction>
</comment>
<comment type="subcellular location">
    <subcellularLocation>
        <location evidence="1">Cytoplasm</location>
    </subcellularLocation>
</comment>
<comment type="similarity">
    <text evidence="1">Belongs to the cytidylate kinase family. Type 1 subfamily.</text>
</comment>
<sequence length="222" mass="25400">MKIAIDGPSASGKSTVAKIISQKLNIPYLETGLVYRTYAYVSLKFKVPIQDIDKLFSLPVKVVPKIGKTEVYIEGKPVNEEDLRSEEVGKRASELGSIPEFRERINKLFKEIINNKQMVVEGRDAGTHIIPEAPVKVFITASPEERAKRRYEQLKELGYEVSFEEILQKILERDKRDMERPKYPFKPAEDAVIIDTTRKSVEEVVEEVLKIIHERSQSAELI</sequence>
<dbReference type="EC" id="2.7.4.25" evidence="1"/>
<dbReference type="EMBL" id="AE000657">
    <property type="protein sequence ID" value="AAC07867.1"/>
    <property type="molecule type" value="Genomic_DNA"/>
</dbReference>
<dbReference type="PIR" id="G70484">
    <property type="entry name" value="G70484"/>
</dbReference>
<dbReference type="RefSeq" id="NP_214476.1">
    <property type="nucleotide sequence ID" value="NC_000918.1"/>
</dbReference>
<dbReference type="RefSeq" id="WP_010881412.1">
    <property type="nucleotide sequence ID" value="NC_000918.1"/>
</dbReference>
<dbReference type="SMR" id="O67907"/>
<dbReference type="FunCoup" id="O67907">
    <property type="interactions" value="294"/>
</dbReference>
<dbReference type="STRING" id="224324.aq_2153"/>
<dbReference type="EnsemblBacteria" id="AAC07867">
    <property type="protein sequence ID" value="AAC07867"/>
    <property type="gene ID" value="aq_2153"/>
</dbReference>
<dbReference type="KEGG" id="aae:aq_2153"/>
<dbReference type="PATRIC" id="fig|224324.8.peg.1664"/>
<dbReference type="eggNOG" id="COG0283">
    <property type="taxonomic scope" value="Bacteria"/>
</dbReference>
<dbReference type="HOGENOM" id="CLU_079959_0_2_0"/>
<dbReference type="InParanoid" id="O67907"/>
<dbReference type="OrthoDB" id="9807434at2"/>
<dbReference type="Proteomes" id="UP000000798">
    <property type="component" value="Chromosome"/>
</dbReference>
<dbReference type="GO" id="GO:0005829">
    <property type="term" value="C:cytosol"/>
    <property type="evidence" value="ECO:0000318"/>
    <property type="project" value="GO_Central"/>
</dbReference>
<dbReference type="GO" id="GO:0004127">
    <property type="term" value="F:(d)CMP kinase activity"/>
    <property type="evidence" value="ECO:0000318"/>
    <property type="project" value="GO_Central"/>
</dbReference>
<dbReference type="GO" id="GO:0005524">
    <property type="term" value="F:ATP binding"/>
    <property type="evidence" value="ECO:0007669"/>
    <property type="project" value="UniProtKB-UniRule"/>
</dbReference>
<dbReference type="GO" id="GO:0036430">
    <property type="term" value="F:CMP kinase activity"/>
    <property type="evidence" value="ECO:0007669"/>
    <property type="project" value="RHEA"/>
</dbReference>
<dbReference type="GO" id="GO:0036431">
    <property type="term" value="F:dCMP kinase activity"/>
    <property type="evidence" value="ECO:0007669"/>
    <property type="project" value="RHEA"/>
</dbReference>
<dbReference type="GO" id="GO:0015949">
    <property type="term" value="P:nucleobase-containing small molecule interconversion"/>
    <property type="evidence" value="ECO:0000318"/>
    <property type="project" value="GO_Central"/>
</dbReference>
<dbReference type="GO" id="GO:0006220">
    <property type="term" value="P:pyrimidine nucleotide metabolic process"/>
    <property type="evidence" value="ECO:0007669"/>
    <property type="project" value="UniProtKB-UniRule"/>
</dbReference>
<dbReference type="CDD" id="cd02020">
    <property type="entry name" value="CMPK"/>
    <property type="match status" value="1"/>
</dbReference>
<dbReference type="Gene3D" id="3.40.50.300">
    <property type="entry name" value="P-loop containing nucleotide triphosphate hydrolases"/>
    <property type="match status" value="1"/>
</dbReference>
<dbReference type="HAMAP" id="MF_00238">
    <property type="entry name" value="Cytidyl_kinase_type1"/>
    <property type="match status" value="1"/>
</dbReference>
<dbReference type="InterPro" id="IPR003136">
    <property type="entry name" value="Cytidylate_kin"/>
</dbReference>
<dbReference type="InterPro" id="IPR011994">
    <property type="entry name" value="Cytidylate_kinase_dom"/>
</dbReference>
<dbReference type="InterPro" id="IPR027417">
    <property type="entry name" value="P-loop_NTPase"/>
</dbReference>
<dbReference type="NCBIfam" id="TIGR00017">
    <property type="entry name" value="cmk"/>
    <property type="match status" value="1"/>
</dbReference>
<dbReference type="Pfam" id="PF02224">
    <property type="entry name" value="Cytidylate_kin"/>
    <property type="match status" value="1"/>
</dbReference>
<dbReference type="SUPFAM" id="SSF52540">
    <property type="entry name" value="P-loop containing nucleoside triphosphate hydrolases"/>
    <property type="match status" value="1"/>
</dbReference>
<keyword id="KW-0067">ATP-binding</keyword>
<keyword id="KW-0963">Cytoplasm</keyword>
<keyword id="KW-0418">Kinase</keyword>
<keyword id="KW-0547">Nucleotide-binding</keyword>
<keyword id="KW-1185">Reference proteome</keyword>
<keyword id="KW-0808">Transferase</keyword>
<evidence type="ECO:0000255" key="1">
    <source>
        <dbReference type="HAMAP-Rule" id="MF_00238"/>
    </source>
</evidence>
<feature type="chain" id="PRO_0000131871" description="Cytidylate kinase">
    <location>
        <begin position="1"/>
        <end position="222"/>
    </location>
</feature>
<feature type="binding site" evidence="1">
    <location>
        <begin position="7"/>
        <end position="15"/>
    </location>
    <ligand>
        <name>ATP</name>
        <dbReference type="ChEBI" id="CHEBI:30616"/>
    </ligand>
</feature>
<proteinExistence type="inferred from homology"/>
<name>KCY_AQUAE</name>
<accession>O67907</accession>
<reference key="1">
    <citation type="journal article" date="1998" name="Nature">
        <title>The complete genome of the hyperthermophilic bacterium Aquifex aeolicus.</title>
        <authorList>
            <person name="Deckert G."/>
            <person name="Warren P.V."/>
            <person name="Gaasterland T."/>
            <person name="Young W.G."/>
            <person name="Lenox A.L."/>
            <person name="Graham D.E."/>
            <person name="Overbeek R."/>
            <person name="Snead M.A."/>
            <person name="Keller M."/>
            <person name="Aujay M."/>
            <person name="Huber R."/>
            <person name="Feldman R.A."/>
            <person name="Short J.M."/>
            <person name="Olsen G.J."/>
            <person name="Swanson R.V."/>
        </authorList>
    </citation>
    <scope>NUCLEOTIDE SEQUENCE [LARGE SCALE GENOMIC DNA]</scope>
    <source>
        <strain>VF5</strain>
    </source>
</reference>
<organism>
    <name type="scientific">Aquifex aeolicus (strain VF5)</name>
    <dbReference type="NCBI Taxonomy" id="224324"/>
    <lineage>
        <taxon>Bacteria</taxon>
        <taxon>Pseudomonadati</taxon>
        <taxon>Aquificota</taxon>
        <taxon>Aquificia</taxon>
        <taxon>Aquificales</taxon>
        <taxon>Aquificaceae</taxon>
        <taxon>Aquifex</taxon>
    </lineage>
</organism>